<reference key="1">
    <citation type="submission" date="2008-02" db="EMBL/GenBank/DDBJ databases">
        <title>Complete sequence of Pseudomonas putida W619.</title>
        <authorList>
            <person name="Copeland A."/>
            <person name="Lucas S."/>
            <person name="Lapidus A."/>
            <person name="Barry K."/>
            <person name="Detter J.C."/>
            <person name="Glavina del Rio T."/>
            <person name="Dalin E."/>
            <person name="Tice H."/>
            <person name="Pitluck S."/>
            <person name="Chain P."/>
            <person name="Malfatti S."/>
            <person name="Shin M."/>
            <person name="Vergez L."/>
            <person name="Schmutz J."/>
            <person name="Larimer F."/>
            <person name="Land M."/>
            <person name="Hauser L."/>
            <person name="Kyrpides N."/>
            <person name="Kim E."/>
            <person name="Taghavi S."/>
            <person name="Vangronsveld D."/>
            <person name="van der Lelie D."/>
            <person name="Richardson P."/>
        </authorList>
    </citation>
    <scope>NUCLEOTIDE SEQUENCE [LARGE SCALE GENOMIC DNA]</scope>
    <source>
        <strain>W619</strain>
    </source>
</reference>
<gene>
    <name evidence="1" type="primary">rlmF</name>
    <name type="ordered locus">PputW619_4241</name>
</gene>
<name>RLMF_PSEPW</name>
<comment type="function">
    <text evidence="1">Specifically methylates the adenine in position 1618 of 23S rRNA.</text>
</comment>
<comment type="catalytic activity">
    <reaction evidence="1">
        <text>adenosine(1618) in 23S rRNA + S-adenosyl-L-methionine = N(6)-methyladenosine(1618) in 23S rRNA + S-adenosyl-L-homocysteine + H(+)</text>
        <dbReference type="Rhea" id="RHEA:16497"/>
        <dbReference type="Rhea" id="RHEA-COMP:10229"/>
        <dbReference type="Rhea" id="RHEA-COMP:10231"/>
        <dbReference type="ChEBI" id="CHEBI:15378"/>
        <dbReference type="ChEBI" id="CHEBI:57856"/>
        <dbReference type="ChEBI" id="CHEBI:59789"/>
        <dbReference type="ChEBI" id="CHEBI:74411"/>
        <dbReference type="ChEBI" id="CHEBI:74449"/>
        <dbReference type="EC" id="2.1.1.181"/>
    </reaction>
</comment>
<comment type="subcellular location">
    <subcellularLocation>
        <location evidence="1">Cytoplasm</location>
    </subcellularLocation>
</comment>
<comment type="similarity">
    <text evidence="1">Belongs to the methyltransferase superfamily. METTL16/RlmF family.</text>
</comment>
<evidence type="ECO:0000255" key="1">
    <source>
        <dbReference type="HAMAP-Rule" id="MF_01848"/>
    </source>
</evidence>
<feature type="chain" id="PRO_0000349935" description="Ribosomal RNA large subunit methyltransferase F">
    <location>
        <begin position="1"/>
        <end position="316"/>
    </location>
</feature>
<organism>
    <name type="scientific">Pseudomonas putida (strain W619)</name>
    <dbReference type="NCBI Taxonomy" id="390235"/>
    <lineage>
        <taxon>Bacteria</taxon>
        <taxon>Pseudomonadati</taxon>
        <taxon>Pseudomonadota</taxon>
        <taxon>Gammaproteobacteria</taxon>
        <taxon>Pseudomonadales</taxon>
        <taxon>Pseudomonadaceae</taxon>
        <taxon>Pseudomonas</taxon>
    </lineage>
</organism>
<sequence>MTQKPTLHPRNRHQGRYDFPSLIKAHPDLARFTITNPHGKPSIDFANPEAVRVFNRALLKAQYGIQHWDIPADYLCPPIPGRADYIHVAADLLAEDNAGEVPKGAQVRALDIGVGANCIYPLLGHCDYRWRFLGSDIDPVALASAKAIVQANGLSKAIALRQQNNAKLILGGLLEEDERFDLTLCNPPFHASREEATRGSQRKWKNLGKQDPKRKLPVLNFGGQNNELWCEGGEIRFVSQLVGESLQYAVQVLWFTSLVSKASNLPGIEAALKKAGVKAVRIVEMGQGQKQSRMVAWSFHDHSQRQAWNERRKSQA</sequence>
<accession>B1JBB3</accession>
<proteinExistence type="inferred from homology"/>
<protein>
    <recommendedName>
        <fullName evidence="1">Ribosomal RNA large subunit methyltransferase F</fullName>
        <ecNumber evidence="1">2.1.1.181</ecNumber>
    </recommendedName>
    <alternativeName>
        <fullName evidence="1">23S rRNA mA1618 methyltransferase</fullName>
    </alternativeName>
    <alternativeName>
        <fullName evidence="1">rRNA adenine N-6-methyltransferase</fullName>
    </alternativeName>
</protein>
<keyword id="KW-0963">Cytoplasm</keyword>
<keyword id="KW-0489">Methyltransferase</keyword>
<keyword id="KW-0698">rRNA processing</keyword>
<keyword id="KW-0949">S-adenosyl-L-methionine</keyword>
<keyword id="KW-0808">Transferase</keyword>
<dbReference type="EC" id="2.1.1.181" evidence="1"/>
<dbReference type="EMBL" id="CP000949">
    <property type="protein sequence ID" value="ACA74721.1"/>
    <property type="molecule type" value="Genomic_DNA"/>
</dbReference>
<dbReference type="SMR" id="B1JBB3"/>
<dbReference type="STRING" id="390235.PputW619_4241"/>
<dbReference type="KEGG" id="ppw:PputW619_4241"/>
<dbReference type="eggNOG" id="COG3129">
    <property type="taxonomic scope" value="Bacteria"/>
</dbReference>
<dbReference type="HOGENOM" id="CLU_027534_3_0_6"/>
<dbReference type="OrthoDB" id="1115728at2"/>
<dbReference type="GO" id="GO:0005737">
    <property type="term" value="C:cytoplasm"/>
    <property type="evidence" value="ECO:0007669"/>
    <property type="project" value="UniProtKB-SubCell"/>
</dbReference>
<dbReference type="GO" id="GO:0052907">
    <property type="term" value="F:23S rRNA (adenine(1618)-N(6))-methyltransferase activity"/>
    <property type="evidence" value="ECO:0007669"/>
    <property type="project" value="UniProtKB-EC"/>
</dbReference>
<dbReference type="GO" id="GO:0070475">
    <property type="term" value="P:rRNA base methylation"/>
    <property type="evidence" value="ECO:0007669"/>
    <property type="project" value="TreeGrafter"/>
</dbReference>
<dbReference type="CDD" id="cd02440">
    <property type="entry name" value="AdoMet_MTases"/>
    <property type="match status" value="1"/>
</dbReference>
<dbReference type="Gene3D" id="3.40.50.150">
    <property type="entry name" value="Vaccinia Virus protein VP39"/>
    <property type="match status" value="1"/>
</dbReference>
<dbReference type="HAMAP" id="MF_01848">
    <property type="entry name" value="23SrRNA_methyltr_F"/>
    <property type="match status" value="1"/>
</dbReference>
<dbReference type="InterPro" id="IPR010286">
    <property type="entry name" value="METTL16/RlmF"/>
</dbReference>
<dbReference type="InterPro" id="IPR016909">
    <property type="entry name" value="rRNA_lsu_MeTfrase_F"/>
</dbReference>
<dbReference type="InterPro" id="IPR029063">
    <property type="entry name" value="SAM-dependent_MTases_sf"/>
</dbReference>
<dbReference type="NCBIfam" id="NF008725">
    <property type="entry name" value="PRK11727.1"/>
    <property type="match status" value="1"/>
</dbReference>
<dbReference type="PANTHER" id="PTHR13393:SF0">
    <property type="entry name" value="RNA N6-ADENOSINE-METHYLTRANSFERASE METTL16"/>
    <property type="match status" value="1"/>
</dbReference>
<dbReference type="PANTHER" id="PTHR13393">
    <property type="entry name" value="SAM-DEPENDENT METHYLTRANSFERASE"/>
    <property type="match status" value="1"/>
</dbReference>
<dbReference type="Pfam" id="PF05971">
    <property type="entry name" value="Methyltransf_10"/>
    <property type="match status" value="1"/>
</dbReference>
<dbReference type="PIRSF" id="PIRSF029038">
    <property type="entry name" value="Mtase_YbiN_prd"/>
    <property type="match status" value="1"/>
</dbReference>
<dbReference type="SUPFAM" id="SSF53335">
    <property type="entry name" value="S-adenosyl-L-methionine-dependent methyltransferases"/>
    <property type="match status" value="1"/>
</dbReference>